<reference key="1">
    <citation type="journal article" date="2009" name="PLoS Genet.">
        <title>Organised genome dynamics in the Escherichia coli species results in highly diverse adaptive paths.</title>
        <authorList>
            <person name="Touchon M."/>
            <person name="Hoede C."/>
            <person name="Tenaillon O."/>
            <person name="Barbe V."/>
            <person name="Baeriswyl S."/>
            <person name="Bidet P."/>
            <person name="Bingen E."/>
            <person name="Bonacorsi S."/>
            <person name="Bouchier C."/>
            <person name="Bouvet O."/>
            <person name="Calteau A."/>
            <person name="Chiapello H."/>
            <person name="Clermont O."/>
            <person name="Cruveiller S."/>
            <person name="Danchin A."/>
            <person name="Diard M."/>
            <person name="Dossat C."/>
            <person name="Karoui M.E."/>
            <person name="Frapy E."/>
            <person name="Garry L."/>
            <person name="Ghigo J.M."/>
            <person name="Gilles A.M."/>
            <person name="Johnson J."/>
            <person name="Le Bouguenec C."/>
            <person name="Lescat M."/>
            <person name="Mangenot S."/>
            <person name="Martinez-Jehanne V."/>
            <person name="Matic I."/>
            <person name="Nassif X."/>
            <person name="Oztas S."/>
            <person name="Petit M.A."/>
            <person name="Pichon C."/>
            <person name="Rouy Z."/>
            <person name="Ruf C.S."/>
            <person name="Schneider D."/>
            <person name="Tourret J."/>
            <person name="Vacherie B."/>
            <person name="Vallenet D."/>
            <person name="Medigue C."/>
            <person name="Rocha E.P.C."/>
            <person name="Denamur E."/>
        </authorList>
    </citation>
    <scope>NUCLEOTIDE SEQUENCE [LARGE SCALE GENOMIC DNA]</scope>
    <source>
        <strain>55989 / EAEC</strain>
    </source>
</reference>
<sequence>MTLLALGINHKTAPVSLRERVSFSPDKLDQALDSLLAQPMVQGGVVLSTCNRTELYLSVEEQDNLQEALIRWLCDYHNLNEEDLRKSLYWHQDNDAVSHLMRVASGLDSLVLGEPQILGQVKKAFADSQKGHMKASELERMFQKSFSVAKRVRTETDIGASAVSVAFAACTLARQIFESLSTVTVLLVGAGETIELVARHLREHKVQKMIIANRTRERAQILADEVGAEVIALSEIDERLREADIIISSTASPLPIIGKGMVERALKSRRNQPMLLVDIAVPRDVEPEVGKLANAYLYSVDDLQSIISHNLAQRKAAAVEAETIVAQETSEFMAWLRAQSASETIREYRSQAEHVRDELTAKALAALEQGGDAQAIMQDLAWKLTNRLIHAPTKSLQQAARDGDNERLNILRDSLGLE</sequence>
<name>HEM1_ECO55</name>
<dbReference type="EC" id="1.2.1.70" evidence="1"/>
<dbReference type="EMBL" id="CU928145">
    <property type="protein sequence ID" value="CAU97164.1"/>
    <property type="molecule type" value="Genomic_DNA"/>
</dbReference>
<dbReference type="RefSeq" id="WP_000173200.1">
    <property type="nucleotide sequence ID" value="NC_011748.1"/>
</dbReference>
<dbReference type="SMR" id="B7LGX1"/>
<dbReference type="GeneID" id="93775275"/>
<dbReference type="KEGG" id="eck:EC55989_1306"/>
<dbReference type="HOGENOM" id="CLU_035113_2_2_6"/>
<dbReference type="UniPathway" id="UPA00251">
    <property type="reaction ID" value="UER00316"/>
</dbReference>
<dbReference type="Proteomes" id="UP000000746">
    <property type="component" value="Chromosome"/>
</dbReference>
<dbReference type="GO" id="GO:0008883">
    <property type="term" value="F:glutamyl-tRNA reductase activity"/>
    <property type="evidence" value="ECO:0007669"/>
    <property type="project" value="UniProtKB-UniRule"/>
</dbReference>
<dbReference type="GO" id="GO:0050661">
    <property type="term" value="F:NADP binding"/>
    <property type="evidence" value="ECO:0007669"/>
    <property type="project" value="InterPro"/>
</dbReference>
<dbReference type="GO" id="GO:0019353">
    <property type="term" value="P:protoporphyrinogen IX biosynthetic process from glutamate"/>
    <property type="evidence" value="ECO:0007669"/>
    <property type="project" value="TreeGrafter"/>
</dbReference>
<dbReference type="CDD" id="cd05213">
    <property type="entry name" value="NAD_bind_Glutamyl_tRNA_reduct"/>
    <property type="match status" value="1"/>
</dbReference>
<dbReference type="FunFam" id="3.30.460.30:FF:000001">
    <property type="entry name" value="Glutamyl-tRNA reductase"/>
    <property type="match status" value="1"/>
</dbReference>
<dbReference type="FunFam" id="3.40.50.720:FF:000031">
    <property type="entry name" value="Glutamyl-tRNA reductase"/>
    <property type="match status" value="1"/>
</dbReference>
<dbReference type="Gene3D" id="3.30.460.30">
    <property type="entry name" value="Glutamyl-tRNA reductase, N-terminal domain"/>
    <property type="match status" value="1"/>
</dbReference>
<dbReference type="Gene3D" id="3.40.50.720">
    <property type="entry name" value="NAD(P)-binding Rossmann-like Domain"/>
    <property type="match status" value="1"/>
</dbReference>
<dbReference type="HAMAP" id="MF_00087">
    <property type="entry name" value="Glu_tRNA_reductase"/>
    <property type="match status" value="1"/>
</dbReference>
<dbReference type="InterPro" id="IPR000343">
    <property type="entry name" value="4pyrrol_synth_GluRdtase"/>
</dbReference>
<dbReference type="InterPro" id="IPR015896">
    <property type="entry name" value="4pyrrol_synth_GluRdtase_dimer"/>
</dbReference>
<dbReference type="InterPro" id="IPR015895">
    <property type="entry name" value="4pyrrol_synth_GluRdtase_N"/>
</dbReference>
<dbReference type="InterPro" id="IPR018214">
    <property type="entry name" value="GluRdtase_CS"/>
</dbReference>
<dbReference type="InterPro" id="IPR036453">
    <property type="entry name" value="GluRdtase_dimer_dom_sf"/>
</dbReference>
<dbReference type="InterPro" id="IPR036343">
    <property type="entry name" value="GluRdtase_N_sf"/>
</dbReference>
<dbReference type="InterPro" id="IPR036291">
    <property type="entry name" value="NAD(P)-bd_dom_sf"/>
</dbReference>
<dbReference type="InterPro" id="IPR006151">
    <property type="entry name" value="Shikm_DH/Glu-tRNA_Rdtase"/>
</dbReference>
<dbReference type="NCBIfam" id="TIGR01035">
    <property type="entry name" value="hemA"/>
    <property type="match status" value="1"/>
</dbReference>
<dbReference type="PANTHER" id="PTHR43013">
    <property type="entry name" value="GLUTAMYL-TRNA REDUCTASE"/>
    <property type="match status" value="1"/>
</dbReference>
<dbReference type="PANTHER" id="PTHR43013:SF1">
    <property type="entry name" value="GLUTAMYL-TRNA REDUCTASE"/>
    <property type="match status" value="1"/>
</dbReference>
<dbReference type="Pfam" id="PF00745">
    <property type="entry name" value="GlutR_dimer"/>
    <property type="match status" value="1"/>
</dbReference>
<dbReference type="Pfam" id="PF05201">
    <property type="entry name" value="GlutR_N"/>
    <property type="match status" value="1"/>
</dbReference>
<dbReference type="Pfam" id="PF01488">
    <property type="entry name" value="Shikimate_DH"/>
    <property type="match status" value="1"/>
</dbReference>
<dbReference type="PIRSF" id="PIRSF000445">
    <property type="entry name" value="4pyrrol_synth_GluRdtase"/>
    <property type="match status" value="1"/>
</dbReference>
<dbReference type="SUPFAM" id="SSF69742">
    <property type="entry name" value="Glutamyl tRNA-reductase catalytic, N-terminal domain"/>
    <property type="match status" value="1"/>
</dbReference>
<dbReference type="SUPFAM" id="SSF69075">
    <property type="entry name" value="Glutamyl tRNA-reductase dimerization domain"/>
    <property type="match status" value="1"/>
</dbReference>
<dbReference type="SUPFAM" id="SSF51735">
    <property type="entry name" value="NAD(P)-binding Rossmann-fold domains"/>
    <property type="match status" value="1"/>
</dbReference>
<dbReference type="PROSITE" id="PS00747">
    <property type="entry name" value="GLUTR"/>
    <property type="match status" value="1"/>
</dbReference>
<evidence type="ECO:0000255" key="1">
    <source>
        <dbReference type="HAMAP-Rule" id="MF_00087"/>
    </source>
</evidence>
<keyword id="KW-0521">NADP</keyword>
<keyword id="KW-0560">Oxidoreductase</keyword>
<keyword id="KW-0627">Porphyrin biosynthesis</keyword>
<keyword id="KW-1185">Reference proteome</keyword>
<comment type="function">
    <text evidence="1">Catalyzes the NADPH-dependent reduction of glutamyl-tRNA(Glu) to glutamate 1-semialdehyde (GSA).</text>
</comment>
<comment type="catalytic activity">
    <reaction evidence="1">
        <text>(S)-4-amino-5-oxopentanoate + tRNA(Glu) + NADP(+) = L-glutamyl-tRNA(Glu) + NADPH + H(+)</text>
        <dbReference type="Rhea" id="RHEA:12344"/>
        <dbReference type="Rhea" id="RHEA-COMP:9663"/>
        <dbReference type="Rhea" id="RHEA-COMP:9680"/>
        <dbReference type="ChEBI" id="CHEBI:15378"/>
        <dbReference type="ChEBI" id="CHEBI:57501"/>
        <dbReference type="ChEBI" id="CHEBI:57783"/>
        <dbReference type="ChEBI" id="CHEBI:58349"/>
        <dbReference type="ChEBI" id="CHEBI:78442"/>
        <dbReference type="ChEBI" id="CHEBI:78520"/>
        <dbReference type="EC" id="1.2.1.70"/>
    </reaction>
</comment>
<comment type="pathway">
    <text evidence="1">Porphyrin-containing compound metabolism; protoporphyrin-IX biosynthesis; 5-aminolevulinate from L-glutamyl-tRNA(Glu): step 1/2.</text>
</comment>
<comment type="subunit">
    <text evidence="1">Homodimer.</text>
</comment>
<comment type="domain">
    <text evidence="1">Possesses an unusual extended V-shaped dimeric structure with each monomer consisting of three distinct domains arranged along a curved 'spinal' alpha-helix. The N-terminal catalytic domain specifically recognizes the glutamate moiety of the substrate. The second domain is the NADPH-binding domain, and the third C-terminal domain is responsible for dimerization.</text>
</comment>
<comment type="miscellaneous">
    <text evidence="1">During catalysis, the active site Cys acts as a nucleophile attacking the alpha-carbonyl group of tRNA-bound glutamate with the formation of a thioester intermediate between enzyme and glutamate, and the concomitant release of tRNA(Glu). The thioester intermediate is finally reduced by direct hydride transfer from NADPH, to form the product GSA.</text>
</comment>
<comment type="similarity">
    <text evidence="1">Belongs to the glutamyl-tRNA reductase family.</text>
</comment>
<organism>
    <name type="scientific">Escherichia coli (strain 55989 / EAEC)</name>
    <dbReference type="NCBI Taxonomy" id="585055"/>
    <lineage>
        <taxon>Bacteria</taxon>
        <taxon>Pseudomonadati</taxon>
        <taxon>Pseudomonadota</taxon>
        <taxon>Gammaproteobacteria</taxon>
        <taxon>Enterobacterales</taxon>
        <taxon>Enterobacteriaceae</taxon>
        <taxon>Escherichia</taxon>
    </lineage>
</organism>
<accession>B7LGX1</accession>
<feature type="chain" id="PRO_1000190521" description="Glutamyl-tRNA reductase">
    <location>
        <begin position="1"/>
        <end position="418"/>
    </location>
</feature>
<feature type="active site" description="Nucleophile" evidence="1">
    <location>
        <position position="50"/>
    </location>
</feature>
<feature type="binding site" evidence="1">
    <location>
        <begin position="49"/>
        <end position="52"/>
    </location>
    <ligand>
        <name>substrate</name>
    </ligand>
</feature>
<feature type="binding site" evidence="1">
    <location>
        <position position="109"/>
    </location>
    <ligand>
        <name>substrate</name>
    </ligand>
</feature>
<feature type="binding site" evidence="1">
    <location>
        <begin position="114"/>
        <end position="116"/>
    </location>
    <ligand>
        <name>substrate</name>
    </ligand>
</feature>
<feature type="binding site" evidence="1">
    <location>
        <position position="120"/>
    </location>
    <ligand>
        <name>substrate</name>
    </ligand>
</feature>
<feature type="binding site" evidence="1">
    <location>
        <begin position="189"/>
        <end position="194"/>
    </location>
    <ligand>
        <name>NADP(+)</name>
        <dbReference type="ChEBI" id="CHEBI:58349"/>
    </ligand>
</feature>
<feature type="site" description="Important for activity" evidence="1">
    <location>
        <position position="99"/>
    </location>
</feature>
<proteinExistence type="inferred from homology"/>
<protein>
    <recommendedName>
        <fullName evidence="1">Glutamyl-tRNA reductase</fullName>
        <shortName evidence="1">GluTR</shortName>
        <ecNumber evidence="1">1.2.1.70</ecNumber>
    </recommendedName>
</protein>
<gene>
    <name evidence="1" type="primary">hemA</name>
    <name type="ordered locus">EC55989_1306</name>
</gene>